<sequence length="331" mass="36737">MLDIAMPKLECVAAAENYGRFKIEPLDPGYGHTLGNALRRVLLSSIPGAAVIKIKIDGIFHEFSPIQGVREDATEIVLNVKGIRLRSYAERPVKMILSKTGPGVVRASDIECPSNVEIVNPDHYIATLDSSDARLDMELTVERHRGYLPAENRDPVPIGEIPVDAIFTPVHKVNYVVEHTRIGGMTDFDRLLLEIWTDGTVKPGDALSYAAQVLVQYSSIIADFNRFDDEQEQVGDANGLVIPSEIYDMPIEDLDLSTRTYNCLKRADITKVGQVLEMDEKQLLAVRNLGQKSMDEIREKLIERNLLPTLPFNSAILNTNVAARLNDGSAE</sequence>
<evidence type="ECO:0000255" key="1">
    <source>
        <dbReference type="HAMAP-Rule" id="MF_00059"/>
    </source>
</evidence>
<name>RPOA_HERA2</name>
<keyword id="KW-0240">DNA-directed RNA polymerase</keyword>
<keyword id="KW-0548">Nucleotidyltransferase</keyword>
<keyword id="KW-0804">Transcription</keyword>
<keyword id="KW-0808">Transferase</keyword>
<proteinExistence type="inferred from homology"/>
<gene>
    <name evidence="1" type="primary">rpoA</name>
    <name type="ordered locus">Haur_4940</name>
</gene>
<protein>
    <recommendedName>
        <fullName evidence="1">DNA-directed RNA polymerase subunit alpha</fullName>
        <shortName evidence="1">RNAP subunit alpha</shortName>
        <ecNumber evidence="1">2.7.7.6</ecNumber>
    </recommendedName>
    <alternativeName>
        <fullName evidence="1">RNA polymerase subunit alpha</fullName>
    </alternativeName>
    <alternativeName>
        <fullName evidence="1">Transcriptase subunit alpha</fullName>
    </alternativeName>
</protein>
<organism>
    <name type="scientific">Herpetosiphon aurantiacus (strain ATCC 23779 / DSM 785 / 114-95)</name>
    <dbReference type="NCBI Taxonomy" id="316274"/>
    <lineage>
        <taxon>Bacteria</taxon>
        <taxon>Bacillati</taxon>
        <taxon>Chloroflexota</taxon>
        <taxon>Chloroflexia</taxon>
        <taxon>Herpetosiphonales</taxon>
        <taxon>Herpetosiphonaceae</taxon>
        <taxon>Herpetosiphon</taxon>
    </lineage>
</organism>
<comment type="function">
    <text evidence="1">DNA-dependent RNA polymerase catalyzes the transcription of DNA into RNA using the four ribonucleoside triphosphates as substrates.</text>
</comment>
<comment type="catalytic activity">
    <reaction evidence="1">
        <text>RNA(n) + a ribonucleoside 5'-triphosphate = RNA(n+1) + diphosphate</text>
        <dbReference type="Rhea" id="RHEA:21248"/>
        <dbReference type="Rhea" id="RHEA-COMP:14527"/>
        <dbReference type="Rhea" id="RHEA-COMP:17342"/>
        <dbReference type="ChEBI" id="CHEBI:33019"/>
        <dbReference type="ChEBI" id="CHEBI:61557"/>
        <dbReference type="ChEBI" id="CHEBI:140395"/>
        <dbReference type="EC" id="2.7.7.6"/>
    </reaction>
</comment>
<comment type="subunit">
    <text evidence="1">Homodimer. The RNAP catalytic core consists of 2 alpha, 1 beta, 1 beta' and 1 omega subunit. When a sigma factor is associated with the core the holoenzyme is formed, which can initiate transcription.</text>
</comment>
<comment type="domain">
    <text evidence="1">The N-terminal domain is essential for RNAP assembly and basal transcription, whereas the C-terminal domain is involved in interaction with transcriptional regulators and with upstream promoter elements.</text>
</comment>
<comment type="similarity">
    <text evidence="1">Belongs to the RNA polymerase alpha chain family.</text>
</comment>
<accession>A9B437</accession>
<reference key="1">
    <citation type="journal article" date="2011" name="Stand. Genomic Sci.">
        <title>Complete genome sequence of the filamentous gliding predatory bacterium Herpetosiphon aurantiacus type strain (114-95(T)).</title>
        <authorList>
            <person name="Kiss H."/>
            <person name="Nett M."/>
            <person name="Domin N."/>
            <person name="Martin K."/>
            <person name="Maresca J.A."/>
            <person name="Copeland A."/>
            <person name="Lapidus A."/>
            <person name="Lucas S."/>
            <person name="Berry K.W."/>
            <person name="Glavina Del Rio T."/>
            <person name="Dalin E."/>
            <person name="Tice H."/>
            <person name="Pitluck S."/>
            <person name="Richardson P."/>
            <person name="Bruce D."/>
            <person name="Goodwin L."/>
            <person name="Han C."/>
            <person name="Detter J.C."/>
            <person name="Schmutz J."/>
            <person name="Brettin T."/>
            <person name="Land M."/>
            <person name="Hauser L."/>
            <person name="Kyrpides N.C."/>
            <person name="Ivanova N."/>
            <person name="Goeker M."/>
            <person name="Woyke T."/>
            <person name="Klenk H.P."/>
            <person name="Bryant D.A."/>
        </authorList>
    </citation>
    <scope>NUCLEOTIDE SEQUENCE [LARGE SCALE GENOMIC DNA]</scope>
    <source>
        <strain>ATCC 23779 / DSM 785 / 114-95</strain>
    </source>
</reference>
<feature type="chain" id="PRO_1000091949" description="DNA-directed RNA polymerase subunit alpha">
    <location>
        <begin position="1"/>
        <end position="331"/>
    </location>
</feature>
<feature type="region of interest" description="Alpha N-terminal domain (alpha-NTD)" evidence="1">
    <location>
        <begin position="1"/>
        <end position="225"/>
    </location>
</feature>
<feature type="region of interest" description="Alpha C-terminal domain (alpha-CTD)" evidence="1">
    <location>
        <begin position="243"/>
        <end position="331"/>
    </location>
</feature>
<dbReference type="EC" id="2.7.7.6" evidence="1"/>
<dbReference type="EMBL" id="CP000875">
    <property type="protein sequence ID" value="ABX07570.1"/>
    <property type="molecule type" value="Genomic_DNA"/>
</dbReference>
<dbReference type="SMR" id="A9B437"/>
<dbReference type="FunCoup" id="A9B437">
    <property type="interactions" value="399"/>
</dbReference>
<dbReference type="STRING" id="316274.Haur_4940"/>
<dbReference type="KEGG" id="hau:Haur_4940"/>
<dbReference type="eggNOG" id="COG0202">
    <property type="taxonomic scope" value="Bacteria"/>
</dbReference>
<dbReference type="HOGENOM" id="CLU_053084_0_1_0"/>
<dbReference type="InParanoid" id="A9B437"/>
<dbReference type="Proteomes" id="UP000000787">
    <property type="component" value="Chromosome"/>
</dbReference>
<dbReference type="GO" id="GO:0005737">
    <property type="term" value="C:cytoplasm"/>
    <property type="evidence" value="ECO:0007669"/>
    <property type="project" value="UniProtKB-ARBA"/>
</dbReference>
<dbReference type="GO" id="GO:0000428">
    <property type="term" value="C:DNA-directed RNA polymerase complex"/>
    <property type="evidence" value="ECO:0007669"/>
    <property type="project" value="UniProtKB-KW"/>
</dbReference>
<dbReference type="GO" id="GO:0003677">
    <property type="term" value="F:DNA binding"/>
    <property type="evidence" value="ECO:0007669"/>
    <property type="project" value="UniProtKB-UniRule"/>
</dbReference>
<dbReference type="GO" id="GO:0003899">
    <property type="term" value="F:DNA-directed RNA polymerase activity"/>
    <property type="evidence" value="ECO:0007669"/>
    <property type="project" value="UniProtKB-UniRule"/>
</dbReference>
<dbReference type="GO" id="GO:0046983">
    <property type="term" value="F:protein dimerization activity"/>
    <property type="evidence" value="ECO:0007669"/>
    <property type="project" value="InterPro"/>
</dbReference>
<dbReference type="GO" id="GO:0006351">
    <property type="term" value="P:DNA-templated transcription"/>
    <property type="evidence" value="ECO:0007669"/>
    <property type="project" value="UniProtKB-UniRule"/>
</dbReference>
<dbReference type="CDD" id="cd06928">
    <property type="entry name" value="RNAP_alpha_NTD"/>
    <property type="match status" value="1"/>
</dbReference>
<dbReference type="FunFam" id="2.170.120.12:FF:000001">
    <property type="entry name" value="DNA-directed RNA polymerase subunit alpha"/>
    <property type="match status" value="1"/>
</dbReference>
<dbReference type="Gene3D" id="1.10.150.20">
    <property type="entry name" value="5' to 3' exonuclease, C-terminal subdomain"/>
    <property type="match status" value="1"/>
</dbReference>
<dbReference type="Gene3D" id="2.170.120.12">
    <property type="entry name" value="DNA-directed RNA polymerase, insert domain"/>
    <property type="match status" value="1"/>
</dbReference>
<dbReference type="Gene3D" id="3.30.1360.10">
    <property type="entry name" value="RNA polymerase, RBP11-like subunit"/>
    <property type="match status" value="1"/>
</dbReference>
<dbReference type="HAMAP" id="MF_00059">
    <property type="entry name" value="RNApol_bact_RpoA"/>
    <property type="match status" value="1"/>
</dbReference>
<dbReference type="InterPro" id="IPR011262">
    <property type="entry name" value="DNA-dir_RNA_pol_insert"/>
</dbReference>
<dbReference type="InterPro" id="IPR011263">
    <property type="entry name" value="DNA-dir_RNA_pol_RpoA/D/Rpb3"/>
</dbReference>
<dbReference type="InterPro" id="IPR011773">
    <property type="entry name" value="DNA-dir_RpoA"/>
</dbReference>
<dbReference type="InterPro" id="IPR036603">
    <property type="entry name" value="RBP11-like"/>
</dbReference>
<dbReference type="InterPro" id="IPR011260">
    <property type="entry name" value="RNAP_asu_C"/>
</dbReference>
<dbReference type="InterPro" id="IPR036643">
    <property type="entry name" value="RNApol_insert_sf"/>
</dbReference>
<dbReference type="NCBIfam" id="NF003513">
    <property type="entry name" value="PRK05182.1-2"/>
    <property type="match status" value="1"/>
</dbReference>
<dbReference type="NCBIfam" id="NF003519">
    <property type="entry name" value="PRK05182.2-5"/>
    <property type="match status" value="1"/>
</dbReference>
<dbReference type="NCBIfam" id="TIGR02027">
    <property type="entry name" value="rpoA"/>
    <property type="match status" value="1"/>
</dbReference>
<dbReference type="Pfam" id="PF01000">
    <property type="entry name" value="RNA_pol_A_bac"/>
    <property type="match status" value="1"/>
</dbReference>
<dbReference type="Pfam" id="PF03118">
    <property type="entry name" value="RNA_pol_A_CTD"/>
    <property type="match status" value="1"/>
</dbReference>
<dbReference type="Pfam" id="PF01193">
    <property type="entry name" value="RNA_pol_L"/>
    <property type="match status" value="1"/>
</dbReference>
<dbReference type="SMART" id="SM00662">
    <property type="entry name" value="RPOLD"/>
    <property type="match status" value="1"/>
</dbReference>
<dbReference type="SUPFAM" id="SSF47789">
    <property type="entry name" value="C-terminal domain of RNA polymerase alpha subunit"/>
    <property type="match status" value="1"/>
</dbReference>
<dbReference type="SUPFAM" id="SSF56553">
    <property type="entry name" value="Insert subdomain of RNA polymerase alpha subunit"/>
    <property type="match status" value="1"/>
</dbReference>
<dbReference type="SUPFAM" id="SSF55257">
    <property type="entry name" value="RBP11-like subunits of RNA polymerase"/>
    <property type="match status" value="1"/>
</dbReference>